<comment type="function">
    <text evidence="2">With S4 and S5 plays an important role in translational accuracy.</text>
</comment>
<comment type="function">
    <text evidence="2">Interacts with and stabilizes bases of the 16S rRNA that are involved in tRNA selection in the A site and with the mRNA backbone. Located at the interface of the 30S and 50S subunits, it traverses the body of the 30S subunit contacting proteins on the other side and probably holding the rRNA structure together. The combined cluster of proteins S8, S12 and S17 appears to hold together the shoulder and platform of the 30S subunit.</text>
</comment>
<comment type="subunit">
    <text evidence="2">Part of the 30S ribosomal subunit. Contacts proteins S8 and S17. May interact with IF1 in the 30S initiation complex.</text>
</comment>
<comment type="similarity">
    <text evidence="2">Belongs to the universal ribosomal protein uS12 family.</text>
</comment>
<dbReference type="EMBL" id="AM711867">
    <property type="protein sequence ID" value="CAN02706.1"/>
    <property type="molecule type" value="Genomic_DNA"/>
</dbReference>
<dbReference type="RefSeq" id="WP_012039312.1">
    <property type="nucleotide sequence ID" value="NC_009480.1"/>
</dbReference>
<dbReference type="SMR" id="A5CUB9"/>
<dbReference type="GeneID" id="92984335"/>
<dbReference type="KEGG" id="cmi:CMM_2623"/>
<dbReference type="eggNOG" id="COG0048">
    <property type="taxonomic scope" value="Bacteria"/>
</dbReference>
<dbReference type="HOGENOM" id="CLU_104295_1_2_11"/>
<dbReference type="OrthoDB" id="9802366at2"/>
<dbReference type="Proteomes" id="UP000001564">
    <property type="component" value="Chromosome"/>
</dbReference>
<dbReference type="GO" id="GO:0015935">
    <property type="term" value="C:small ribosomal subunit"/>
    <property type="evidence" value="ECO:0007669"/>
    <property type="project" value="InterPro"/>
</dbReference>
<dbReference type="GO" id="GO:0019843">
    <property type="term" value="F:rRNA binding"/>
    <property type="evidence" value="ECO:0007669"/>
    <property type="project" value="UniProtKB-UniRule"/>
</dbReference>
<dbReference type="GO" id="GO:0003735">
    <property type="term" value="F:structural constituent of ribosome"/>
    <property type="evidence" value="ECO:0007669"/>
    <property type="project" value="InterPro"/>
</dbReference>
<dbReference type="GO" id="GO:0000049">
    <property type="term" value="F:tRNA binding"/>
    <property type="evidence" value="ECO:0007669"/>
    <property type="project" value="UniProtKB-UniRule"/>
</dbReference>
<dbReference type="GO" id="GO:0006412">
    <property type="term" value="P:translation"/>
    <property type="evidence" value="ECO:0007669"/>
    <property type="project" value="UniProtKB-UniRule"/>
</dbReference>
<dbReference type="CDD" id="cd03368">
    <property type="entry name" value="Ribosomal_S12"/>
    <property type="match status" value="1"/>
</dbReference>
<dbReference type="FunFam" id="2.40.50.140:FF:000001">
    <property type="entry name" value="30S ribosomal protein S12"/>
    <property type="match status" value="1"/>
</dbReference>
<dbReference type="Gene3D" id="2.40.50.140">
    <property type="entry name" value="Nucleic acid-binding proteins"/>
    <property type="match status" value="1"/>
</dbReference>
<dbReference type="HAMAP" id="MF_00403_B">
    <property type="entry name" value="Ribosomal_uS12_B"/>
    <property type="match status" value="1"/>
</dbReference>
<dbReference type="InterPro" id="IPR012340">
    <property type="entry name" value="NA-bd_OB-fold"/>
</dbReference>
<dbReference type="InterPro" id="IPR006032">
    <property type="entry name" value="Ribosomal_uS12"/>
</dbReference>
<dbReference type="InterPro" id="IPR005679">
    <property type="entry name" value="Ribosomal_uS12_bac"/>
</dbReference>
<dbReference type="NCBIfam" id="TIGR00981">
    <property type="entry name" value="rpsL_bact"/>
    <property type="match status" value="1"/>
</dbReference>
<dbReference type="PANTHER" id="PTHR11652">
    <property type="entry name" value="30S RIBOSOMAL PROTEIN S12 FAMILY MEMBER"/>
    <property type="match status" value="1"/>
</dbReference>
<dbReference type="Pfam" id="PF00164">
    <property type="entry name" value="Ribosom_S12_S23"/>
    <property type="match status" value="1"/>
</dbReference>
<dbReference type="PIRSF" id="PIRSF002133">
    <property type="entry name" value="Ribosomal_S12/S23"/>
    <property type="match status" value="1"/>
</dbReference>
<dbReference type="PRINTS" id="PR01034">
    <property type="entry name" value="RIBOSOMALS12"/>
</dbReference>
<dbReference type="SUPFAM" id="SSF50249">
    <property type="entry name" value="Nucleic acid-binding proteins"/>
    <property type="match status" value="1"/>
</dbReference>
<dbReference type="PROSITE" id="PS00055">
    <property type="entry name" value="RIBOSOMAL_S12"/>
    <property type="match status" value="1"/>
</dbReference>
<evidence type="ECO:0000250" key="1"/>
<evidence type="ECO:0000255" key="2">
    <source>
        <dbReference type="HAMAP-Rule" id="MF_00403"/>
    </source>
</evidence>
<evidence type="ECO:0000256" key="3">
    <source>
        <dbReference type="SAM" id="MobiDB-lite"/>
    </source>
</evidence>
<evidence type="ECO:0000305" key="4"/>
<protein>
    <recommendedName>
        <fullName evidence="2">Small ribosomal subunit protein uS12</fullName>
    </recommendedName>
    <alternativeName>
        <fullName evidence="4">30S ribosomal protein S12</fullName>
    </alternativeName>
</protein>
<proteinExistence type="inferred from homology"/>
<reference key="1">
    <citation type="journal article" date="2008" name="J. Bacteriol.">
        <title>The genome sequence of the tomato-pathogenic actinomycete Clavibacter michiganensis subsp. michiganensis NCPPB382 reveals a large island involved in pathogenicity.</title>
        <authorList>
            <person name="Gartemann K.-H."/>
            <person name="Abt B."/>
            <person name="Bekel T."/>
            <person name="Burger A."/>
            <person name="Engemann J."/>
            <person name="Fluegel M."/>
            <person name="Gaigalat L."/>
            <person name="Goesmann A."/>
            <person name="Graefen I."/>
            <person name="Kalinowski J."/>
            <person name="Kaup O."/>
            <person name="Kirchner O."/>
            <person name="Krause L."/>
            <person name="Linke B."/>
            <person name="McHardy A."/>
            <person name="Meyer F."/>
            <person name="Pohle S."/>
            <person name="Rueckert C."/>
            <person name="Schneiker S."/>
            <person name="Zellermann E.-M."/>
            <person name="Puehler A."/>
            <person name="Eichenlaub R."/>
            <person name="Kaiser O."/>
            <person name="Bartels D."/>
        </authorList>
    </citation>
    <scope>NUCLEOTIDE SEQUENCE [LARGE SCALE GENOMIC DNA]</scope>
    <source>
        <strain>NCPPB 382</strain>
    </source>
</reference>
<feature type="chain" id="PRO_1000049780" description="Small ribosomal subunit protein uS12">
    <location>
        <begin position="1"/>
        <end position="124"/>
    </location>
</feature>
<feature type="region of interest" description="Disordered" evidence="3">
    <location>
        <begin position="1"/>
        <end position="20"/>
    </location>
</feature>
<feature type="compositionally biased region" description="Basic residues" evidence="3">
    <location>
        <begin position="9"/>
        <end position="18"/>
    </location>
</feature>
<feature type="modified residue" description="3-methylthioaspartic acid" evidence="1">
    <location>
        <position position="89"/>
    </location>
</feature>
<name>RS12_CLAM3</name>
<keyword id="KW-0488">Methylation</keyword>
<keyword id="KW-0687">Ribonucleoprotein</keyword>
<keyword id="KW-0689">Ribosomal protein</keyword>
<keyword id="KW-0694">RNA-binding</keyword>
<keyword id="KW-0699">rRNA-binding</keyword>
<keyword id="KW-0820">tRNA-binding</keyword>
<sequence length="124" mass="13814">MPTIQQLVRKGRTPKVVKTKAPALKANPQQRGVCTRVYTTTPKKPNSALRKVARVKLSNGQEVTAYIPGEGHNLQEHSMVLVRGGRVKDLPGVRYKIVRGALDTQAVKNRKQARSRYGAKMEKK</sequence>
<accession>A5CUB9</accession>
<gene>
    <name evidence="2" type="primary">rpsL</name>
    <name type="ordered locus">CMM_2623</name>
</gene>
<organism>
    <name type="scientific">Clavibacter michiganensis subsp. michiganensis (strain NCPPB 382)</name>
    <dbReference type="NCBI Taxonomy" id="443906"/>
    <lineage>
        <taxon>Bacteria</taxon>
        <taxon>Bacillati</taxon>
        <taxon>Actinomycetota</taxon>
        <taxon>Actinomycetes</taxon>
        <taxon>Micrococcales</taxon>
        <taxon>Microbacteriaceae</taxon>
        <taxon>Clavibacter</taxon>
    </lineage>
</organism>